<organism>
    <name type="scientific">Salmonella paratyphi B (strain ATCC BAA-1250 / SPB7)</name>
    <dbReference type="NCBI Taxonomy" id="1016998"/>
    <lineage>
        <taxon>Bacteria</taxon>
        <taxon>Pseudomonadati</taxon>
        <taxon>Pseudomonadota</taxon>
        <taxon>Gammaproteobacteria</taxon>
        <taxon>Enterobacterales</taxon>
        <taxon>Enterobacteriaceae</taxon>
        <taxon>Salmonella</taxon>
    </lineage>
</organism>
<protein>
    <recommendedName>
        <fullName evidence="1">UPF0434 protein YcaR</fullName>
    </recommendedName>
</protein>
<gene>
    <name evidence="1" type="primary">ycaR</name>
    <name type="ordered locus">SPAB_02527</name>
</gene>
<evidence type="ECO:0000255" key="1">
    <source>
        <dbReference type="HAMAP-Rule" id="MF_01187"/>
    </source>
</evidence>
<reference key="1">
    <citation type="submission" date="2007-11" db="EMBL/GenBank/DDBJ databases">
        <authorList>
            <consortium name="The Salmonella enterica serovar Paratyphi B Genome Sequencing Project"/>
            <person name="McClelland M."/>
            <person name="Sanderson E.K."/>
            <person name="Porwollik S."/>
            <person name="Spieth J."/>
            <person name="Clifton W.S."/>
            <person name="Fulton R."/>
            <person name="Cordes M."/>
            <person name="Wollam A."/>
            <person name="Shah N."/>
            <person name="Pepin K."/>
            <person name="Bhonagiri V."/>
            <person name="Nash W."/>
            <person name="Johnson M."/>
            <person name="Thiruvilangam P."/>
            <person name="Wilson R."/>
        </authorList>
    </citation>
    <scope>NUCLEOTIDE SEQUENCE [LARGE SCALE GENOMIC DNA]</scope>
    <source>
        <strain>ATCC BAA-1250 / SPB7</strain>
    </source>
</reference>
<comment type="similarity">
    <text evidence="1">Belongs to the UPF0434 family.</text>
</comment>
<dbReference type="EMBL" id="CP000886">
    <property type="protein sequence ID" value="ABX67907.1"/>
    <property type="molecule type" value="Genomic_DNA"/>
</dbReference>
<dbReference type="RefSeq" id="WP_000350061.1">
    <property type="nucleotide sequence ID" value="NC_010102.1"/>
</dbReference>
<dbReference type="SMR" id="A9N7U5"/>
<dbReference type="KEGG" id="spq:SPAB_02527"/>
<dbReference type="PATRIC" id="fig|1016998.12.peg.2394"/>
<dbReference type="HOGENOM" id="CLU_155659_3_1_6"/>
<dbReference type="BioCyc" id="SENT1016998:SPAB_RS10270-MONOMER"/>
<dbReference type="Proteomes" id="UP000008556">
    <property type="component" value="Chromosome"/>
</dbReference>
<dbReference type="GO" id="GO:0005829">
    <property type="term" value="C:cytosol"/>
    <property type="evidence" value="ECO:0007669"/>
    <property type="project" value="TreeGrafter"/>
</dbReference>
<dbReference type="FunFam" id="2.20.25.10:FF:000002">
    <property type="entry name" value="UPF0434 protein YcaR"/>
    <property type="match status" value="1"/>
</dbReference>
<dbReference type="Gene3D" id="2.20.25.10">
    <property type="match status" value="1"/>
</dbReference>
<dbReference type="HAMAP" id="MF_01187">
    <property type="entry name" value="UPF0434"/>
    <property type="match status" value="1"/>
</dbReference>
<dbReference type="InterPro" id="IPR005651">
    <property type="entry name" value="Trm112-like"/>
</dbReference>
<dbReference type="NCBIfam" id="NF008806">
    <property type="entry name" value="PRK11827.1"/>
    <property type="match status" value="1"/>
</dbReference>
<dbReference type="PANTHER" id="PTHR33505:SF4">
    <property type="entry name" value="PROTEIN PREY, MITOCHONDRIAL"/>
    <property type="match status" value="1"/>
</dbReference>
<dbReference type="PANTHER" id="PTHR33505">
    <property type="entry name" value="ZGC:162634"/>
    <property type="match status" value="1"/>
</dbReference>
<dbReference type="Pfam" id="PF03966">
    <property type="entry name" value="Trm112p"/>
    <property type="match status" value="1"/>
</dbReference>
<dbReference type="SUPFAM" id="SSF158997">
    <property type="entry name" value="Trm112p-like"/>
    <property type="match status" value="1"/>
</dbReference>
<proteinExistence type="inferred from homology"/>
<name>YCAR_SALPB</name>
<sequence length="60" mass="6856">MDHRLLEIIACPVCNGKLWYNQEQQELICKLDNLAFPLRDGIPVLLENEARALTSDESKS</sequence>
<accession>A9N7U5</accession>
<feature type="chain" id="PRO_1000085462" description="UPF0434 protein YcaR">
    <location>
        <begin position="1"/>
        <end position="60"/>
    </location>
</feature>